<comment type="function">
    <text evidence="1">The RecF protein is involved in DNA metabolism; it is required for DNA replication and normal SOS inducibility. RecF binds preferentially to single-stranded, linear DNA. It also seems to bind ATP.</text>
</comment>
<comment type="subcellular location">
    <subcellularLocation>
        <location evidence="1">Cytoplasm</location>
    </subcellularLocation>
</comment>
<comment type="similarity">
    <text evidence="1">Belongs to the RecF family.</text>
</comment>
<gene>
    <name evidence="1" type="primary">recF</name>
    <name type="ordered locus">SEQ_2221</name>
</gene>
<feature type="chain" id="PRO_1000133700" description="DNA replication and repair protein RecF">
    <location>
        <begin position="1"/>
        <end position="369"/>
    </location>
</feature>
<feature type="binding site" evidence="1">
    <location>
        <begin position="30"/>
        <end position="37"/>
    </location>
    <ligand>
        <name>ATP</name>
        <dbReference type="ChEBI" id="CHEBI:30616"/>
    </ligand>
</feature>
<accession>C0MBG1</accession>
<reference key="1">
    <citation type="journal article" date="2009" name="PLoS Pathog.">
        <title>Genomic evidence for the evolution of Streptococcus equi: host restriction, increased virulence, and genetic exchange with human pathogens.</title>
        <authorList>
            <person name="Holden M.T.G."/>
            <person name="Heather Z."/>
            <person name="Paillot R."/>
            <person name="Steward K.F."/>
            <person name="Webb K."/>
            <person name="Ainslie F."/>
            <person name="Jourdan T."/>
            <person name="Bason N.C."/>
            <person name="Holroyd N.E."/>
            <person name="Mungall K."/>
            <person name="Quail M.A."/>
            <person name="Sanders M."/>
            <person name="Simmonds M."/>
            <person name="Willey D."/>
            <person name="Brooks K."/>
            <person name="Aanensen D.M."/>
            <person name="Spratt B.G."/>
            <person name="Jolley K.A."/>
            <person name="Maiden M.C.J."/>
            <person name="Kehoe M."/>
            <person name="Chanter N."/>
            <person name="Bentley S.D."/>
            <person name="Robinson C."/>
            <person name="Maskell D.J."/>
            <person name="Parkhill J."/>
            <person name="Waller A.S."/>
        </authorList>
    </citation>
    <scope>NUCLEOTIDE SEQUENCE [LARGE SCALE GENOMIC DNA]</scope>
    <source>
        <strain>4047</strain>
    </source>
</reference>
<protein>
    <recommendedName>
        <fullName evidence="1">DNA replication and repair protein RecF</fullName>
    </recommendedName>
</protein>
<proteinExistence type="inferred from homology"/>
<organism>
    <name type="scientific">Streptococcus equi subsp. equi (strain 4047)</name>
    <dbReference type="NCBI Taxonomy" id="553482"/>
    <lineage>
        <taxon>Bacteria</taxon>
        <taxon>Bacillati</taxon>
        <taxon>Bacillota</taxon>
        <taxon>Bacilli</taxon>
        <taxon>Lactobacillales</taxon>
        <taxon>Streptococcaceae</taxon>
        <taxon>Streptococcus</taxon>
    </lineage>
</organism>
<name>RECF_STRE4</name>
<evidence type="ECO:0000255" key="1">
    <source>
        <dbReference type="HAMAP-Rule" id="MF_00365"/>
    </source>
</evidence>
<keyword id="KW-0067">ATP-binding</keyword>
<keyword id="KW-0963">Cytoplasm</keyword>
<keyword id="KW-0227">DNA damage</keyword>
<keyword id="KW-0234">DNA repair</keyword>
<keyword id="KW-0235">DNA replication</keyword>
<keyword id="KW-0238">DNA-binding</keyword>
<keyword id="KW-0547">Nucleotide-binding</keyword>
<keyword id="KW-0742">SOS response</keyword>
<dbReference type="EMBL" id="FM204883">
    <property type="protein sequence ID" value="CAW95638.1"/>
    <property type="molecule type" value="Genomic_DNA"/>
</dbReference>
<dbReference type="RefSeq" id="WP_015898710.1">
    <property type="nucleotide sequence ID" value="NC_012471.1"/>
</dbReference>
<dbReference type="SMR" id="C0MBG1"/>
<dbReference type="KEGG" id="seu:SEQ_2221"/>
<dbReference type="HOGENOM" id="CLU_040267_0_1_9"/>
<dbReference type="OrthoDB" id="9803889at2"/>
<dbReference type="Proteomes" id="UP000001365">
    <property type="component" value="Chromosome"/>
</dbReference>
<dbReference type="GO" id="GO:0005737">
    <property type="term" value="C:cytoplasm"/>
    <property type="evidence" value="ECO:0007669"/>
    <property type="project" value="UniProtKB-SubCell"/>
</dbReference>
<dbReference type="GO" id="GO:0005524">
    <property type="term" value="F:ATP binding"/>
    <property type="evidence" value="ECO:0007669"/>
    <property type="project" value="UniProtKB-UniRule"/>
</dbReference>
<dbReference type="GO" id="GO:0003697">
    <property type="term" value="F:single-stranded DNA binding"/>
    <property type="evidence" value="ECO:0007669"/>
    <property type="project" value="UniProtKB-UniRule"/>
</dbReference>
<dbReference type="GO" id="GO:0006260">
    <property type="term" value="P:DNA replication"/>
    <property type="evidence" value="ECO:0007669"/>
    <property type="project" value="UniProtKB-UniRule"/>
</dbReference>
<dbReference type="GO" id="GO:0000731">
    <property type="term" value="P:DNA synthesis involved in DNA repair"/>
    <property type="evidence" value="ECO:0007669"/>
    <property type="project" value="TreeGrafter"/>
</dbReference>
<dbReference type="GO" id="GO:0006302">
    <property type="term" value="P:double-strand break repair"/>
    <property type="evidence" value="ECO:0007669"/>
    <property type="project" value="TreeGrafter"/>
</dbReference>
<dbReference type="GO" id="GO:0009432">
    <property type="term" value="P:SOS response"/>
    <property type="evidence" value="ECO:0007669"/>
    <property type="project" value="UniProtKB-UniRule"/>
</dbReference>
<dbReference type="CDD" id="cd03242">
    <property type="entry name" value="ABC_RecF"/>
    <property type="match status" value="1"/>
</dbReference>
<dbReference type="Gene3D" id="3.40.50.300">
    <property type="entry name" value="P-loop containing nucleotide triphosphate hydrolases"/>
    <property type="match status" value="1"/>
</dbReference>
<dbReference type="Gene3D" id="1.20.1050.90">
    <property type="entry name" value="RecF/RecN/SMC, N-terminal domain"/>
    <property type="match status" value="1"/>
</dbReference>
<dbReference type="HAMAP" id="MF_00365">
    <property type="entry name" value="RecF"/>
    <property type="match status" value="1"/>
</dbReference>
<dbReference type="InterPro" id="IPR001238">
    <property type="entry name" value="DNA-binding_RecF"/>
</dbReference>
<dbReference type="InterPro" id="IPR018078">
    <property type="entry name" value="DNA-binding_RecF_CS"/>
</dbReference>
<dbReference type="InterPro" id="IPR027417">
    <property type="entry name" value="P-loop_NTPase"/>
</dbReference>
<dbReference type="InterPro" id="IPR003395">
    <property type="entry name" value="RecF/RecN/SMC_N"/>
</dbReference>
<dbReference type="InterPro" id="IPR042174">
    <property type="entry name" value="RecF_2"/>
</dbReference>
<dbReference type="NCBIfam" id="TIGR00611">
    <property type="entry name" value="recf"/>
    <property type="match status" value="1"/>
</dbReference>
<dbReference type="PANTHER" id="PTHR32182">
    <property type="entry name" value="DNA REPLICATION AND REPAIR PROTEIN RECF"/>
    <property type="match status" value="1"/>
</dbReference>
<dbReference type="PANTHER" id="PTHR32182:SF0">
    <property type="entry name" value="DNA REPLICATION AND REPAIR PROTEIN RECF"/>
    <property type="match status" value="1"/>
</dbReference>
<dbReference type="Pfam" id="PF02463">
    <property type="entry name" value="SMC_N"/>
    <property type="match status" value="1"/>
</dbReference>
<dbReference type="SUPFAM" id="SSF52540">
    <property type="entry name" value="P-loop containing nucleoside triphosphate hydrolases"/>
    <property type="match status" value="1"/>
</dbReference>
<dbReference type="PROSITE" id="PS00617">
    <property type="entry name" value="RECF_1"/>
    <property type="match status" value="1"/>
</dbReference>
<dbReference type="PROSITE" id="PS00618">
    <property type="entry name" value="RECF_2"/>
    <property type="match status" value="1"/>
</dbReference>
<sequence length="369" mass="42156">MWIKELNLTHYRNYQQASAAFSPGLNVFIGDNAQGKTNFLEAIYFLSVTRSHRTKSDKDLIYFDERDCSISGTLERLSGRVQLEILLSDKGRITKINTLKQAKLSDYIGAMMVVLFAPEDLQLVKGSPNLRRKFMDIDLGQIKPVYLSDLSHYNHVLKQRNAYLKSVHQLDNDFLSVLDEQLVTYGSRVMAHRLAFVQSLAKEANKHHQAISNGLEKLSISYQASVSFEHQQEIYQQFMNQLKTTHQRDFLRKNTGVGPHRDDLVFYINDMNANFASQGQHRSLILSLKMAEVSLMKQLTGDNPILLLDDVMSELDNTRQTKLLGAVKKENVQTFITTTSLEHLSQLPKDISLFKVNKGTIERDSIMID</sequence>